<protein>
    <recommendedName>
        <fullName>Serpentine receptor class alpha-4</fullName>
        <shortName>Protein sra-4</shortName>
    </recommendedName>
</protein>
<feature type="chain" id="PRO_0000104471" description="Serpentine receptor class alpha-4">
    <location>
        <begin position="1"/>
        <end position="329"/>
    </location>
</feature>
<feature type="transmembrane region" description="Helical" evidence="1">
    <location>
        <begin position="25"/>
        <end position="45"/>
    </location>
</feature>
<feature type="transmembrane region" description="Helical" evidence="1">
    <location>
        <begin position="103"/>
        <end position="123"/>
    </location>
</feature>
<feature type="transmembrane region" description="Helical" evidence="1">
    <location>
        <begin position="144"/>
        <end position="164"/>
    </location>
</feature>
<feature type="transmembrane region" description="Helical" evidence="1">
    <location>
        <begin position="188"/>
        <end position="208"/>
    </location>
</feature>
<feature type="transmembrane region" description="Helical" evidence="1">
    <location>
        <begin position="238"/>
        <end position="258"/>
    </location>
</feature>
<feature type="transmembrane region" description="Helical" evidence="1">
    <location>
        <begin position="273"/>
        <end position="293"/>
    </location>
</feature>
<dbReference type="EMBL" id="Z48009">
    <property type="protein sequence ID" value="CAA88079.1"/>
    <property type="molecule type" value="Genomic_DNA"/>
</dbReference>
<dbReference type="PIR" id="T18615">
    <property type="entry name" value="T18615"/>
</dbReference>
<dbReference type="RefSeq" id="NP_496049.1">
    <property type="nucleotide sequence ID" value="NM_063648.2"/>
</dbReference>
<dbReference type="SMR" id="Q09206"/>
<dbReference type="FunCoup" id="Q09206">
    <property type="interactions" value="9"/>
</dbReference>
<dbReference type="PaxDb" id="6239-AH6.8"/>
<dbReference type="EnsemblMetazoa" id="AH6.8.1">
    <property type="protein sequence ID" value="AH6.8.1"/>
    <property type="gene ID" value="WBGene00005030"/>
</dbReference>
<dbReference type="GeneID" id="191775"/>
<dbReference type="KEGG" id="cel:CELE_AH6.8"/>
<dbReference type="UCSC" id="AH6.8">
    <property type="organism name" value="c. elegans"/>
</dbReference>
<dbReference type="AGR" id="WB:WBGene00005030"/>
<dbReference type="CTD" id="191775"/>
<dbReference type="WormBase" id="AH6.8">
    <property type="protein sequence ID" value="CE01462"/>
    <property type="gene ID" value="WBGene00005030"/>
    <property type="gene designation" value="sra-4"/>
</dbReference>
<dbReference type="eggNOG" id="ENOG502TJHT">
    <property type="taxonomic scope" value="Eukaryota"/>
</dbReference>
<dbReference type="GeneTree" id="ENSGT00970000195848"/>
<dbReference type="HOGENOM" id="CLU_048025_0_1_1"/>
<dbReference type="InParanoid" id="Q09206"/>
<dbReference type="OrthoDB" id="5801916at2759"/>
<dbReference type="PhylomeDB" id="Q09206"/>
<dbReference type="PRO" id="PR:Q09206"/>
<dbReference type="Proteomes" id="UP000001940">
    <property type="component" value="Chromosome II"/>
</dbReference>
<dbReference type="GO" id="GO:0016020">
    <property type="term" value="C:membrane"/>
    <property type="evidence" value="ECO:0007669"/>
    <property type="project" value="UniProtKB-SubCell"/>
</dbReference>
<dbReference type="GO" id="GO:0004930">
    <property type="term" value="F:G protein-coupled receptor activity"/>
    <property type="evidence" value="ECO:0007669"/>
    <property type="project" value="InterPro"/>
</dbReference>
<dbReference type="GO" id="GO:0004984">
    <property type="term" value="F:olfactory receptor activity"/>
    <property type="evidence" value="ECO:0000318"/>
    <property type="project" value="GO_Central"/>
</dbReference>
<dbReference type="GO" id="GO:0050907">
    <property type="term" value="P:detection of chemical stimulus involved in sensory perception"/>
    <property type="evidence" value="ECO:0000318"/>
    <property type="project" value="GO_Central"/>
</dbReference>
<dbReference type="InterPro" id="IPR000344">
    <property type="entry name" value="7TM_GPCR_serpentine_rcpt_Sra"/>
</dbReference>
<dbReference type="InterPro" id="IPR051080">
    <property type="entry name" value="Nematode_rcpt-like_serp_alpha"/>
</dbReference>
<dbReference type="PANTHER" id="PTHR31357:SF5">
    <property type="entry name" value="SERPENTINE RECEPTOR CLASS ALPHA-1-RELATED"/>
    <property type="match status" value="1"/>
</dbReference>
<dbReference type="PANTHER" id="PTHR31357">
    <property type="entry name" value="SERPENTINE RECEPTOR CLASS ALPHA-10"/>
    <property type="match status" value="1"/>
</dbReference>
<dbReference type="Pfam" id="PF02117">
    <property type="entry name" value="7TM_GPCR_Sra"/>
    <property type="match status" value="1"/>
</dbReference>
<dbReference type="PRINTS" id="PR00697">
    <property type="entry name" value="TMPROTEINSRA"/>
</dbReference>
<organism>
    <name type="scientific">Caenorhabditis elegans</name>
    <dbReference type="NCBI Taxonomy" id="6239"/>
    <lineage>
        <taxon>Eukaryota</taxon>
        <taxon>Metazoa</taxon>
        <taxon>Ecdysozoa</taxon>
        <taxon>Nematoda</taxon>
        <taxon>Chromadorea</taxon>
        <taxon>Rhabditida</taxon>
        <taxon>Rhabditina</taxon>
        <taxon>Rhabditomorpha</taxon>
        <taxon>Rhabditoidea</taxon>
        <taxon>Rhabditidae</taxon>
        <taxon>Peloderinae</taxon>
        <taxon>Caenorhabditis</taxon>
    </lineage>
</organism>
<accession>Q09206</accession>
<keyword id="KW-0472">Membrane</keyword>
<keyword id="KW-1185">Reference proteome</keyword>
<keyword id="KW-0812">Transmembrane</keyword>
<keyword id="KW-1133">Transmembrane helix</keyword>
<name>SRA4_CAEEL</name>
<evidence type="ECO:0000255" key="1"/>
<evidence type="ECO:0000305" key="2"/>
<sequence length="329" mass="38392">MSLTKCASKLEIDRLISLNFRINQIIVLIPVFITFIFTYYAIKVVQKKSIFELSTKFLLIQNFFSANLHQVLYAIETIRRLHISLFETNQPCIPLKTEFECRLYLEVFVSGVAGMVYGQTGLLLERACATFIKNYEEKKSVRTGLAISVSVLCLSFITSRLIIWDDPLDGYQLTCISFPSDSVDRSSYFQSICTLLALFNLVTSILIWKYNKKFEYSTPFVVGPRFRKREVIDSTSTICFLTFVQFIFFLVYSLGFFIIKSIREIISYENYYLVAVWLYTPPYIAASFPILIFYRIRSSYANRVLIIKKFTNTKQTIEEHIQQMKNAWK</sequence>
<comment type="subcellular location">
    <subcellularLocation>
        <location evidence="2">Membrane</location>
        <topology evidence="2">Multi-pass membrane protein</topology>
    </subcellularLocation>
</comment>
<comment type="similarity">
    <text evidence="2">Belongs to the nematode receptor-like protein sra family.</text>
</comment>
<reference key="1">
    <citation type="journal article" date="1998" name="Science">
        <title>Genome sequence of the nematode C. elegans: a platform for investigating biology.</title>
        <authorList>
            <consortium name="The C. elegans sequencing consortium"/>
        </authorList>
    </citation>
    <scope>NUCLEOTIDE SEQUENCE [LARGE SCALE GENOMIC DNA]</scope>
    <source>
        <strain>Bristol N2</strain>
    </source>
</reference>
<proteinExistence type="inferred from homology"/>
<gene>
    <name type="primary">sra-4</name>
    <name type="ORF">AH6.8</name>
</gene>